<name>NDUS7_PONPY</name>
<sequence>MAALSAPGLCGFRILGLRSSVGTAVQARGVHQSVATDGPSSTQPALPKARAVAPKPSSRGEYVVAKLDDLVNWARRSSLWPMTFGLACCAVEMMHMAAPRYDMDRFGVVFRASPRQSDVMIVAGTLTNKMAPALRKVYDQMPEPRYVVSMGSCANGGGYYHYSYSVVRGCDRIVPVDIYIPGCPPTAEALLYGILQLQRKIKRERRLQIWYRR</sequence>
<gene>
    <name type="primary">NDUFS7</name>
</gene>
<organism>
    <name type="scientific">Pongo pygmaeus</name>
    <name type="common">Bornean orangutan</name>
    <dbReference type="NCBI Taxonomy" id="9600"/>
    <lineage>
        <taxon>Eukaryota</taxon>
        <taxon>Metazoa</taxon>
        <taxon>Chordata</taxon>
        <taxon>Craniata</taxon>
        <taxon>Vertebrata</taxon>
        <taxon>Euteleostomi</taxon>
        <taxon>Mammalia</taxon>
        <taxon>Eutheria</taxon>
        <taxon>Euarchontoglires</taxon>
        <taxon>Primates</taxon>
        <taxon>Haplorrhini</taxon>
        <taxon>Catarrhini</taxon>
        <taxon>Hominidae</taxon>
        <taxon>Pongo</taxon>
    </lineage>
</organism>
<accession>P0CB84</accession>
<accession>Q0MQH8</accession>
<accession>Q5R4J8</accession>
<comment type="function">
    <text evidence="1">Core subunit of the mitochondrial membrane respiratory chain NADH dehydrogenase (Complex I) which catalyzes electron transfer from NADH through the respiratory chain, using ubiquinone as an electron acceptor. Essential for the catalytic activity of complex I.</text>
</comment>
<comment type="catalytic activity">
    <reaction evidence="1">
        <text>a ubiquinone + NADH + 5 H(+)(in) = a ubiquinol + NAD(+) + 4 H(+)(out)</text>
        <dbReference type="Rhea" id="RHEA:29091"/>
        <dbReference type="Rhea" id="RHEA-COMP:9565"/>
        <dbReference type="Rhea" id="RHEA-COMP:9566"/>
        <dbReference type="ChEBI" id="CHEBI:15378"/>
        <dbReference type="ChEBI" id="CHEBI:16389"/>
        <dbReference type="ChEBI" id="CHEBI:17976"/>
        <dbReference type="ChEBI" id="CHEBI:57540"/>
        <dbReference type="ChEBI" id="CHEBI:57945"/>
        <dbReference type="EC" id="7.1.1.2"/>
    </reaction>
</comment>
<comment type="cofactor">
    <cofactor evidence="5">
        <name>[4Fe-4S] cluster</name>
        <dbReference type="ChEBI" id="CHEBI:49883"/>
    </cofactor>
    <text evidence="5">Binds 1 [4Fe-4S] cluster.</text>
</comment>
<comment type="subunit">
    <text evidence="2">Core subunit of respiratory chain NADH dehydrogenase (Complex I) which is composed of 45 different subunits (By similarity). This is a component of the iron-sulfur (IP) fragment of the enzyme (By similarity).</text>
</comment>
<comment type="subcellular location">
    <subcellularLocation>
        <location evidence="2">Mitochondrion inner membrane</location>
        <topology evidence="2">Peripheral membrane protein</topology>
        <orientation evidence="2">Matrix side</orientation>
    </subcellularLocation>
</comment>
<comment type="PTM">
    <text evidence="1">Hydroxylated ar Arg-111 by NDUFAF5 early in the pathway of assembly of complex I, before the formation of the juncture between peripheral and membrane arms.</text>
</comment>
<comment type="similarity">
    <text evidence="5">Belongs to the complex I 20 kDa subunit family.</text>
</comment>
<reference key="1">
    <citation type="journal article" date="2006" name="Gene">
        <title>Adaptive selection of mitochondrial complex I subunits during primate radiation.</title>
        <authorList>
            <person name="Mishmar D."/>
            <person name="Ruiz-Pesini E."/>
            <person name="Mondragon-Palomino M."/>
            <person name="Procaccio V."/>
            <person name="Gaut B."/>
            <person name="Wallace D.C."/>
        </authorList>
    </citation>
    <scope>NUCLEOTIDE SEQUENCE [MRNA]</scope>
</reference>
<feature type="transit peptide" description="Mitochondrion" evidence="2">
    <location>
        <begin position="1"/>
        <end position="38"/>
    </location>
</feature>
<feature type="chain" id="PRO_0000389251" description="NADH dehydrogenase [ubiquinone] iron-sulfur protein 7, mitochondrial">
    <location>
        <begin position="39"/>
        <end position="213"/>
    </location>
</feature>
<feature type="region of interest" description="Disordered" evidence="4">
    <location>
        <begin position="32"/>
        <end position="53"/>
    </location>
</feature>
<feature type="compositionally biased region" description="Polar residues" evidence="4">
    <location>
        <begin position="33"/>
        <end position="44"/>
    </location>
</feature>
<feature type="binding site" evidence="3">
    <location>
        <position position="88"/>
    </location>
    <ligand>
        <name>[4Fe-4S] cluster</name>
        <dbReference type="ChEBI" id="CHEBI:49883"/>
    </ligand>
</feature>
<feature type="binding site" evidence="3">
    <location>
        <position position="89"/>
    </location>
    <ligand>
        <name>[4Fe-4S] cluster</name>
        <dbReference type="ChEBI" id="CHEBI:49883"/>
    </ligand>
</feature>
<feature type="binding site" evidence="3">
    <location>
        <position position="153"/>
    </location>
    <ligand>
        <name>[4Fe-4S] cluster</name>
        <dbReference type="ChEBI" id="CHEBI:49883"/>
    </ligand>
</feature>
<feature type="binding site" evidence="3">
    <location>
        <position position="183"/>
    </location>
    <ligand>
        <name>[4Fe-4S] cluster</name>
        <dbReference type="ChEBI" id="CHEBI:49883"/>
    </ligand>
</feature>
<feature type="modified residue" description="Hydroxyarginine" evidence="2">
    <location>
        <position position="111"/>
    </location>
</feature>
<evidence type="ECO:0000250" key="1">
    <source>
        <dbReference type="UniProtKB" id="O75251"/>
    </source>
</evidence>
<evidence type="ECO:0000250" key="2">
    <source>
        <dbReference type="UniProtKB" id="P42026"/>
    </source>
</evidence>
<evidence type="ECO:0000255" key="3"/>
<evidence type="ECO:0000256" key="4">
    <source>
        <dbReference type="SAM" id="MobiDB-lite"/>
    </source>
</evidence>
<evidence type="ECO:0000305" key="5"/>
<keyword id="KW-0004">4Fe-4S</keyword>
<keyword id="KW-0249">Electron transport</keyword>
<keyword id="KW-0379">Hydroxylation</keyword>
<keyword id="KW-0408">Iron</keyword>
<keyword id="KW-0411">Iron-sulfur</keyword>
<keyword id="KW-0472">Membrane</keyword>
<keyword id="KW-0479">Metal-binding</keyword>
<keyword id="KW-0496">Mitochondrion</keyword>
<keyword id="KW-0999">Mitochondrion inner membrane</keyword>
<keyword id="KW-0520">NAD</keyword>
<keyword id="KW-0560">Oxidoreductase</keyword>
<keyword id="KW-0679">Respiratory chain</keyword>
<keyword id="KW-0809">Transit peptide</keyword>
<keyword id="KW-1278">Translocase</keyword>
<keyword id="KW-0813">Transport</keyword>
<keyword id="KW-0830">Ubiquinone</keyword>
<proteinExistence type="evidence at transcript level"/>
<protein>
    <recommendedName>
        <fullName>NADH dehydrogenase [ubiquinone] iron-sulfur protein 7, mitochondrial</fullName>
        <ecNumber evidence="1">7.1.1.2</ecNumber>
    </recommendedName>
    <alternativeName>
        <fullName>Complex I-20kD</fullName>
        <shortName>CI-20kD</shortName>
    </alternativeName>
    <alternativeName>
        <fullName>NADH-ubiquinone oxidoreductase 20 kDa subunit</fullName>
    </alternativeName>
</protein>
<dbReference type="EC" id="7.1.1.2" evidence="1"/>
<dbReference type="EMBL" id="DQ885656">
    <property type="protein sequence ID" value="ABH12165.1"/>
    <property type="molecule type" value="mRNA"/>
</dbReference>
<dbReference type="SMR" id="P0CB84"/>
<dbReference type="GO" id="GO:0005743">
    <property type="term" value="C:mitochondrial inner membrane"/>
    <property type="evidence" value="ECO:0000250"/>
    <property type="project" value="UniProtKB"/>
</dbReference>
<dbReference type="GO" id="GO:0045271">
    <property type="term" value="C:respiratory chain complex I"/>
    <property type="evidence" value="ECO:0000250"/>
    <property type="project" value="UniProtKB"/>
</dbReference>
<dbReference type="GO" id="GO:0051539">
    <property type="term" value="F:4 iron, 4 sulfur cluster binding"/>
    <property type="evidence" value="ECO:0007669"/>
    <property type="project" value="UniProtKB-KW"/>
</dbReference>
<dbReference type="GO" id="GO:0046872">
    <property type="term" value="F:metal ion binding"/>
    <property type="evidence" value="ECO:0007669"/>
    <property type="project" value="UniProtKB-KW"/>
</dbReference>
<dbReference type="GO" id="GO:0008137">
    <property type="term" value="F:NADH dehydrogenase (ubiquinone) activity"/>
    <property type="evidence" value="ECO:0000250"/>
    <property type="project" value="UniProtKB"/>
</dbReference>
<dbReference type="GO" id="GO:0048038">
    <property type="term" value="F:quinone binding"/>
    <property type="evidence" value="ECO:0007669"/>
    <property type="project" value="InterPro"/>
</dbReference>
<dbReference type="GO" id="GO:0015990">
    <property type="term" value="P:electron transport coupled proton transport"/>
    <property type="evidence" value="ECO:0007669"/>
    <property type="project" value="TreeGrafter"/>
</dbReference>
<dbReference type="GO" id="GO:0006120">
    <property type="term" value="P:mitochondrial electron transport, NADH to ubiquinone"/>
    <property type="evidence" value="ECO:0000250"/>
    <property type="project" value="UniProtKB"/>
</dbReference>
<dbReference type="GO" id="GO:0032981">
    <property type="term" value="P:mitochondrial respiratory chain complex I assembly"/>
    <property type="evidence" value="ECO:0000250"/>
    <property type="project" value="UniProtKB"/>
</dbReference>
<dbReference type="FunFam" id="3.40.50.12280:FF:000001">
    <property type="entry name" value="NADH-quinone oxidoreductase subunit B 2"/>
    <property type="match status" value="1"/>
</dbReference>
<dbReference type="Gene3D" id="3.40.50.12280">
    <property type="match status" value="1"/>
</dbReference>
<dbReference type="HAMAP" id="MF_01356">
    <property type="entry name" value="NDH1_NuoB"/>
    <property type="match status" value="1"/>
</dbReference>
<dbReference type="InterPro" id="IPR006137">
    <property type="entry name" value="NADH_UbQ_OxRdtase-like_20kDa"/>
</dbReference>
<dbReference type="InterPro" id="IPR006138">
    <property type="entry name" value="NADH_UQ_OxRdtase_20Kd_su"/>
</dbReference>
<dbReference type="NCBIfam" id="TIGR01957">
    <property type="entry name" value="nuoB_fam"/>
    <property type="match status" value="1"/>
</dbReference>
<dbReference type="NCBIfam" id="NF005012">
    <property type="entry name" value="PRK06411.1"/>
    <property type="match status" value="1"/>
</dbReference>
<dbReference type="PANTHER" id="PTHR11995">
    <property type="entry name" value="NADH DEHYDROGENASE"/>
    <property type="match status" value="1"/>
</dbReference>
<dbReference type="PANTHER" id="PTHR11995:SF22">
    <property type="entry name" value="NADH DEHYDROGENASE [UBIQUINONE] IRON-SULFUR PROTEIN 7, MITOCHONDRIAL"/>
    <property type="match status" value="1"/>
</dbReference>
<dbReference type="Pfam" id="PF01058">
    <property type="entry name" value="Oxidored_q6"/>
    <property type="match status" value="1"/>
</dbReference>
<dbReference type="SUPFAM" id="SSF56770">
    <property type="entry name" value="HydA/Nqo6-like"/>
    <property type="match status" value="1"/>
</dbReference>
<dbReference type="PROSITE" id="PS01150">
    <property type="entry name" value="COMPLEX1_20K"/>
    <property type="match status" value="1"/>
</dbReference>